<name>AROA_YERPG</name>
<accession>A9R7I2</accession>
<evidence type="ECO:0000255" key="1">
    <source>
        <dbReference type="HAMAP-Rule" id="MF_00210"/>
    </source>
</evidence>
<sequence>MLESLTLQPIALVNGTVNLPGSKSVSNRALLLAALAEGTTQLNNVLDSDDIRHMLNALQALGVDFRLSADRTCCEVDGLGGKLVAEQPLSLFLGNAGTAMRPLAAVLCLGNSDIVLTGEPRMKERPIGHLVDALRQGGAQIDYLEQENYPPLRLRGGFRGGELTVDGRVSSQFLTALLMTAPLAEQDTTIRIMGDLVSKPYIDITLHLMKAFGIDVGHENYQIFHIKGGQTYRSPGTYLVEGDASSASYFLAAAAIKGGTVRVTGIGKKSVQGDTKFADVLEKMGAKVTWGDDYIECSRGELQGIDMDMNHIPDAAMTIATTALFATGPTTIRNIYNWRVKETDRLTAMATELRKVGAEVEEGEDYIRVVPPLQLTAADIGTYDDHRMAMCFSLVALSDTPVTILDPKCTAKTFPDYFEQFARLSQLA</sequence>
<dbReference type="EC" id="2.5.1.19" evidence="1"/>
<dbReference type="EMBL" id="CP000901">
    <property type="protein sequence ID" value="ABX84965.1"/>
    <property type="molecule type" value="Genomic_DNA"/>
</dbReference>
<dbReference type="RefSeq" id="WP_002211325.1">
    <property type="nucleotide sequence ID" value="NZ_CP009935.1"/>
</dbReference>
<dbReference type="SMR" id="A9R7I2"/>
<dbReference type="GeneID" id="57977186"/>
<dbReference type="KEGG" id="ypg:YpAngola_A1953"/>
<dbReference type="PATRIC" id="fig|349746.12.peg.2929"/>
<dbReference type="UniPathway" id="UPA00053">
    <property type="reaction ID" value="UER00089"/>
</dbReference>
<dbReference type="GO" id="GO:0005737">
    <property type="term" value="C:cytoplasm"/>
    <property type="evidence" value="ECO:0007669"/>
    <property type="project" value="UniProtKB-SubCell"/>
</dbReference>
<dbReference type="GO" id="GO:0003866">
    <property type="term" value="F:3-phosphoshikimate 1-carboxyvinyltransferase activity"/>
    <property type="evidence" value="ECO:0007669"/>
    <property type="project" value="UniProtKB-UniRule"/>
</dbReference>
<dbReference type="GO" id="GO:0008652">
    <property type="term" value="P:amino acid biosynthetic process"/>
    <property type="evidence" value="ECO:0007669"/>
    <property type="project" value="UniProtKB-KW"/>
</dbReference>
<dbReference type="GO" id="GO:0009073">
    <property type="term" value="P:aromatic amino acid family biosynthetic process"/>
    <property type="evidence" value="ECO:0007669"/>
    <property type="project" value="UniProtKB-KW"/>
</dbReference>
<dbReference type="GO" id="GO:0009423">
    <property type="term" value="P:chorismate biosynthetic process"/>
    <property type="evidence" value="ECO:0007669"/>
    <property type="project" value="UniProtKB-UniRule"/>
</dbReference>
<dbReference type="CDD" id="cd01556">
    <property type="entry name" value="EPSP_synthase"/>
    <property type="match status" value="1"/>
</dbReference>
<dbReference type="FunFam" id="3.65.10.10:FF:000003">
    <property type="entry name" value="3-phosphoshikimate 1-carboxyvinyltransferase"/>
    <property type="match status" value="1"/>
</dbReference>
<dbReference type="FunFam" id="3.65.10.10:FF:000004">
    <property type="entry name" value="3-phosphoshikimate 1-carboxyvinyltransferase"/>
    <property type="match status" value="1"/>
</dbReference>
<dbReference type="Gene3D" id="3.65.10.10">
    <property type="entry name" value="Enolpyruvate transferase domain"/>
    <property type="match status" value="2"/>
</dbReference>
<dbReference type="HAMAP" id="MF_00210">
    <property type="entry name" value="EPSP_synth"/>
    <property type="match status" value="1"/>
</dbReference>
<dbReference type="InterPro" id="IPR001986">
    <property type="entry name" value="Enolpyruvate_Tfrase_dom"/>
</dbReference>
<dbReference type="InterPro" id="IPR036968">
    <property type="entry name" value="Enolpyruvate_Tfrase_sf"/>
</dbReference>
<dbReference type="InterPro" id="IPR006264">
    <property type="entry name" value="EPSP_synthase"/>
</dbReference>
<dbReference type="InterPro" id="IPR023193">
    <property type="entry name" value="EPSP_synthase_CS"/>
</dbReference>
<dbReference type="InterPro" id="IPR013792">
    <property type="entry name" value="RNA3'P_cycl/enolpyr_Trfase_a/b"/>
</dbReference>
<dbReference type="NCBIfam" id="TIGR01356">
    <property type="entry name" value="aroA"/>
    <property type="match status" value="1"/>
</dbReference>
<dbReference type="PANTHER" id="PTHR21090">
    <property type="entry name" value="AROM/DEHYDROQUINATE SYNTHASE"/>
    <property type="match status" value="1"/>
</dbReference>
<dbReference type="PANTHER" id="PTHR21090:SF5">
    <property type="entry name" value="PENTAFUNCTIONAL AROM POLYPEPTIDE"/>
    <property type="match status" value="1"/>
</dbReference>
<dbReference type="Pfam" id="PF00275">
    <property type="entry name" value="EPSP_synthase"/>
    <property type="match status" value="1"/>
</dbReference>
<dbReference type="PIRSF" id="PIRSF000505">
    <property type="entry name" value="EPSPS"/>
    <property type="match status" value="1"/>
</dbReference>
<dbReference type="SUPFAM" id="SSF55205">
    <property type="entry name" value="EPT/RTPC-like"/>
    <property type="match status" value="1"/>
</dbReference>
<dbReference type="PROSITE" id="PS00104">
    <property type="entry name" value="EPSP_SYNTHASE_1"/>
    <property type="match status" value="1"/>
</dbReference>
<dbReference type="PROSITE" id="PS00885">
    <property type="entry name" value="EPSP_SYNTHASE_2"/>
    <property type="match status" value="1"/>
</dbReference>
<gene>
    <name evidence="1" type="primary">aroA</name>
    <name type="ordered locus">YpAngola_A1953</name>
</gene>
<keyword id="KW-0028">Amino-acid biosynthesis</keyword>
<keyword id="KW-0057">Aromatic amino acid biosynthesis</keyword>
<keyword id="KW-0963">Cytoplasm</keyword>
<keyword id="KW-0808">Transferase</keyword>
<proteinExistence type="inferred from homology"/>
<comment type="function">
    <text evidence="1">Catalyzes the transfer of the enolpyruvyl moiety of phosphoenolpyruvate (PEP) to the 5-hydroxyl of shikimate-3-phosphate (S3P) to produce enolpyruvyl shikimate-3-phosphate and inorganic phosphate.</text>
</comment>
<comment type="catalytic activity">
    <reaction evidence="1">
        <text>3-phosphoshikimate + phosphoenolpyruvate = 5-O-(1-carboxyvinyl)-3-phosphoshikimate + phosphate</text>
        <dbReference type="Rhea" id="RHEA:21256"/>
        <dbReference type="ChEBI" id="CHEBI:43474"/>
        <dbReference type="ChEBI" id="CHEBI:57701"/>
        <dbReference type="ChEBI" id="CHEBI:58702"/>
        <dbReference type="ChEBI" id="CHEBI:145989"/>
        <dbReference type="EC" id="2.5.1.19"/>
    </reaction>
    <physiologicalReaction direction="left-to-right" evidence="1">
        <dbReference type="Rhea" id="RHEA:21257"/>
    </physiologicalReaction>
</comment>
<comment type="pathway">
    <text evidence="1">Metabolic intermediate biosynthesis; chorismate biosynthesis; chorismate from D-erythrose 4-phosphate and phosphoenolpyruvate: step 6/7.</text>
</comment>
<comment type="subunit">
    <text evidence="1">Monomer.</text>
</comment>
<comment type="subcellular location">
    <subcellularLocation>
        <location evidence="1">Cytoplasm</location>
    </subcellularLocation>
</comment>
<comment type="similarity">
    <text evidence="1">Belongs to the EPSP synthase family.</text>
</comment>
<organism>
    <name type="scientific">Yersinia pestis bv. Antiqua (strain Angola)</name>
    <dbReference type="NCBI Taxonomy" id="349746"/>
    <lineage>
        <taxon>Bacteria</taxon>
        <taxon>Pseudomonadati</taxon>
        <taxon>Pseudomonadota</taxon>
        <taxon>Gammaproteobacteria</taxon>
        <taxon>Enterobacterales</taxon>
        <taxon>Yersiniaceae</taxon>
        <taxon>Yersinia</taxon>
    </lineage>
</organism>
<feature type="chain" id="PRO_1000099769" description="3-phosphoshikimate 1-carboxyvinyltransferase">
    <location>
        <begin position="1"/>
        <end position="428"/>
    </location>
</feature>
<feature type="active site" description="Proton acceptor" evidence="1">
    <location>
        <position position="314"/>
    </location>
</feature>
<feature type="binding site" evidence="1">
    <location>
        <position position="23"/>
    </location>
    <ligand>
        <name>3-phosphoshikimate</name>
        <dbReference type="ChEBI" id="CHEBI:145989"/>
    </ligand>
</feature>
<feature type="binding site" evidence="1">
    <location>
        <position position="23"/>
    </location>
    <ligand>
        <name>phosphoenolpyruvate</name>
        <dbReference type="ChEBI" id="CHEBI:58702"/>
    </ligand>
</feature>
<feature type="binding site" evidence="1">
    <location>
        <position position="24"/>
    </location>
    <ligand>
        <name>3-phosphoshikimate</name>
        <dbReference type="ChEBI" id="CHEBI:145989"/>
    </ligand>
</feature>
<feature type="binding site" evidence="1">
    <location>
        <position position="28"/>
    </location>
    <ligand>
        <name>3-phosphoshikimate</name>
        <dbReference type="ChEBI" id="CHEBI:145989"/>
    </ligand>
</feature>
<feature type="binding site" evidence="1">
    <location>
        <position position="97"/>
    </location>
    <ligand>
        <name>phosphoenolpyruvate</name>
        <dbReference type="ChEBI" id="CHEBI:58702"/>
    </ligand>
</feature>
<feature type="binding site" evidence="1">
    <location>
        <position position="125"/>
    </location>
    <ligand>
        <name>phosphoenolpyruvate</name>
        <dbReference type="ChEBI" id="CHEBI:58702"/>
    </ligand>
</feature>
<feature type="binding site" evidence="1">
    <location>
        <position position="170"/>
    </location>
    <ligand>
        <name>3-phosphoshikimate</name>
        <dbReference type="ChEBI" id="CHEBI:145989"/>
    </ligand>
</feature>
<feature type="binding site" evidence="1">
    <location>
        <position position="171"/>
    </location>
    <ligand>
        <name>3-phosphoshikimate</name>
        <dbReference type="ChEBI" id="CHEBI:145989"/>
    </ligand>
</feature>
<feature type="binding site" evidence="1">
    <location>
        <position position="172"/>
    </location>
    <ligand>
        <name>3-phosphoshikimate</name>
        <dbReference type="ChEBI" id="CHEBI:145989"/>
    </ligand>
</feature>
<feature type="binding site" evidence="1">
    <location>
        <position position="172"/>
    </location>
    <ligand>
        <name>phosphoenolpyruvate</name>
        <dbReference type="ChEBI" id="CHEBI:58702"/>
    </ligand>
</feature>
<feature type="binding site" evidence="1">
    <location>
        <position position="198"/>
    </location>
    <ligand>
        <name>3-phosphoshikimate</name>
        <dbReference type="ChEBI" id="CHEBI:145989"/>
    </ligand>
</feature>
<feature type="binding site" evidence="1">
    <location>
        <position position="314"/>
    </location>
    <ligand>
        <name>3-phosphoshikimate</name>
        <dbReference type="ChEBI" id="CHEBI:145989"/>
    </ligand>
</feature>
<feature type="binding site" evidence="1">
    <location>
        <position position="337"/>
    </location>
    <ligand>
        <name>3-phosphoshikimate</name>
        <dbReference type="ChEBI" id="CHEBI:145989"/>
    </ligand>
</feature>
<feature type="binding site" evidence="1">
    <location>
        <position position="341"/>
    </location>
    <ligand>
        <name>3-phosphoshikimate</name>
        <dbReference type="ChEBI" id="CHEBI:145989"/>
    </ligand>
</feature>
<feature type="binding site" evidence="1">
    <location>
        <position position="345"/>
    </location>
    <ligand>
        <name>phosphoenolpyruvate</name>
        <dbReference type="ChEBI" id="CHEBI:58702"/>
    </ligand>
</feature>
<feature type="binding site" evidence="1">
    <location>
        <position position="387"/>
    </location>
    <ligand>
        <name>phosphoenolpyruvate</name>
        <dbReference type="ChEBI" id="CHEBI:58702"/>
    </ligand>
</feature>
<feature type="binding site" evidence="1">
    <location>
        <position position="412"/>
    </location>
    <ligand>
        <name>phosphoenolpyruvate</name>
        <dbReference type="ChEBI" id="CHEBI:58702"/>
    </ligand>
</feature>
<protein>
    <recommendedName>
        <fullName evidence="1">3-phosphoshikimate 1-carboxyvinyltransferase</fullName>
        <ecNumber evidence="1">2.5.1.19</ecNumber>
    </recommendedName>
    <alternativeName>
        <fullName evidence="1">5-enolpyruvylshikimate-3-phosphate synthase</fullName>
        <shortName evidence="1">EPSP synthase</shortName>
        <shortName evidence="1">EPSPS</shortName>
    </alternativeName>
</protein>
<reference key="1">
    <citation type="journal article" date="2010" name="J. Bacteriol.">
        <title>Genome sequence of the deep-rooted Yersinia pestis strain Angola reveals new insights into the evolution and pangenome of the plague bacterium.</title>
        <authorList>
            <person name="Eppinger M."/>
            <person name="Worsham P.L."/>
            <person name="Nikolich M.P."/>
            <person name="Riley D.R."/>
            <person name="Sebastian Y."/>
            <person name="Mou S."/>
            <person name="Achtman M."/>
            <person name="Lindler L.E."/>
            <person name="Ravel J."/>
        </authorList>
    </citation>
    <scope>NUCLEOTIDE SEQUENCE [LARGE SCALE GENOMIC DNA]</scope>
    <source>
        <strain>Angola</strain>
    </source>
</reference>